<evidence type="ECO:0000255" key="1">
    <source>
        <dbReference type="HAMAP-Rule" id="MF_03111"/>
    </source>
</evidence>
<proteinExistence type="inferred from homology"/>
<name>COQ4_ASPFC</name>
<organism>
    <name type="scientific">Aspergillus fumigatus (strain CBS 144.89 / FGSC A1163 / CEA10)</name>
    <name type="common">Neosartorya fumigata</name>
    <dbReference type="NCBI Taxonomy" id="451804"/>
    <lineage>
        <taxon>Eukaryota</taxon>
        <taxon>Fungi</taxon>
        <taxon>Dikarya</taxon>
        <taxon>Ascomycota</taxon>
        <taxon>Pezizomycotina</taxon>
        <taxon>Eurotiomycetes</taxon>
        <taxon>Eurotiomycetidae</taxon>
        <taxon>Eurotiales</taxon>
        <taxon>Aspergillaceae</taxon>
        <taxon>Aspergillus</taxon>
        <taxon>Aspergillus subgen. Fumigati</taxon>
    </lineage>
</organism>
<reference key="1">
    <citation type="journal article" date="2008" name="PLoS Genet.">
        <title>Genomic islands in the pathogenic filamentous fungus Aspergillus fumigatus.</title>
        <authorList>
            <person name="Fedorova N.D."/>
            <person name="Khaldi N."/>
            <person name="Joardar V.S."/>
            <person name="Maiti R."/>
            <person name="Amedeo P."/>
            <person name="Anderson M.J."/>
            <person name="Crabtree J."/>
            <person name="Silva J.C."/>
            <person name="Badger J.H."/>
            <person name="Albarraq A."/>
            <person name="Angiuoli S."/>
            <person name="Bussey H."/>
            <person name="Bowyer P."/>
            <person name="Cotty P.J."/>
            <person name="Dyer P.S."/>
            <person name="Egan A."/>
            <person name="Galens K."/>
            <person name="Fraser-Liggett C.M."/>
            <person name="Haas B.J."/>
            <person name="Inman J.M."/>
            <person name="Kent R."/>
            <person name="Lemieux S."/>
            <person name="Malavazi I."/>
            <person name="Orvis J."/>
            <person name="Roemer T."/>
            <person name="Ronning C.M."/>
            <person name="Sundaram J.P."/>
            <person name="Sutton G."/>
            <person name="Turner G."/>
            <person name="Venter J.C."/>
            <person name="White O.R."/>
            <person name="Whitty B.R."/>
            <person name="Youngman P."/>
            <person name="Wolfe K.H."/>
            <person name="Goldman G.H."/>
            <person name="Wortman J.R."/>
            <person name="Jiang B."/>
            <person name="Denning D.W."/>
            <person name="Nierman W.C."/>
        </authorList>
    </citation>
    <scope>NUCLEOTIDE SEQUENCE [LARGE SCALE GENOMIC DNA]</scope>
    <source>
        <strain>CBS 144.89 / FGSC A1163 / CEA10</strain>
    </source>
</reference>
<keyword id="KW-0456">Lyase</keyword>
<keyword id="KW-0472">Membrane</keyword>
<keyword id="KW-0479">Metal-binding</keyword>
<keyword id="KW-0496">Mitochondrion</keyword>
<keyword id="KW-0999">Mitochondrion inner membrane</keyword>
<keyword id="KW-0809">Transit peptide</keyword>
<keyword id="KW-0831">Ubiquinone biosynthesis</keyword>
<keyword id="KW-0862">Zinc</keyword>
<protein>
    <recommendedName>
        <fullName evidence="1">Ubiquinone biosynthesis protein coq4, mitochondrial</fullName>
    </recommendedName>
    <alternativeName>
        <fullName>4-hydroxy-3-methoxy-5-polyprenylbenzoate decarboxylase</fullName>
        <ecNumber evidence="1">4.1.1.130</ecNumber>
    </alternativeName>
    <alternativeName>
        <fullName evidence="1">Coenzyme Q biosynthesis protein 4</fullName>
    </alternativeName>
</protein>
<comment type="function">
    <text evidence="1">Lyase that catalyzes the C1-decarboxylation of 4-hydroxy-3-methoxy-5-(all-trans-polyprenyl)benzoic acid into 2-methoxy-6-(all-trans-polyprenyl)phenol during ubiquinone biosynthesis.</text>
</comment>
<comment type="catalytic activity">
    <reaction evidence="1">
        <text>a 4-hydroxy-3-methoxy-5-(all-trans-polyprenyl)benzoate + H(+) = a 2-methoxy-6-(all-trans-polyprenyl)phenol + CO2</text>
        <dbReference type="Rhea" id="RHEA:81179"/>
        <dbReference type="Rhea" id="RHEA-COMP:9551"/>
        <dbReference type="Rhea" id="RHEA-COMP:10931"/>
        <dbReference type="ChEBI" id="CHEBI:15378"/>
        <dbReference type="ChEBI" id="CHEBI:16526"/>
        <dbReference type="ChEBI" id="CHEBI:62731"/>
        <dbReference type="ChEBI" id="CHEBI:84443"/>
        <dbReference type="EC" id="4.1.1.130"/>
    </reaction>
</comment>
<comment type="cofactor">
    <cofactor evidence="1">
        <name>Zn(2+)</name>
        <dbReference type="ChEBI" id="CHEBI:29105"/>
    </cofactor>
</comment>
<comment type="pathway">
    <text evidence="1">Cofactor biosynthesis; ubiquinone biosynthesis.</text>
</comment>
<comment type="subunit">
    <text evidence="1">Component of a multi-subunit COQ enzyme complex, composed of at least coq3, coq4, coq5, coq6, coq7 and coq9.</text>
</comment>
<comment type="subcellular location">
    <subcellularLocation>
        <location evidence="1">Mitochondrion inner membrane</location>
        <topology evidence="1">Peripheral membrane protein</topology>
        <orientation evidence="1">Matrix side</orientation>
    </subcellularLocation>
</comment>
<comment type="similarity">
    <text evidence="1">Belongs to the COQ4 family.</text>
</comment>
<accession>B0XYZ8</accession>
<feature type="transit peptide" description="Mitochondrion" evidence="1">
    <location>
        <begin position="1"/>
        <end position="31"/>
    </location>
</feature>
<feature type="chain" id="PRO_0000388097" description="Ubiquinone biosynthesis protein coq4, mitochondrial">
    <location>
        <begin position="32"/>
        <end position="285"/>
    </location>
</feature>
<feature type="binding site" evidence="1">
    <location>
        <position position="167"/>
    </location>
    <ligand>
        <name>Zn(2+)</name>
        <dbReference type="ChEBI" id="CHEBI:29105"/>
    </ligand>
</feature>
<feature type="binding site" evidence="1">
    <location>
        <position position="168"/>
    </location>
    <ligand>
        <name>Zn(2+)</name>
        <dbReference type="ChEBI" id="CHEBI:29105"/>
    </ligand>
</feature>
<feature type="binding site" evidence="1">
    <location>
        <position position="171"/>
    </location>
    <ligand>
        <name>Zn(2+)</name>
        <dbReference type="ChEBI" id="CHEBI:29105"/>
    </ligand>
</feature>
<feature type="binding site" evidence="1">
    <location>
        <position position="183"/>
    </location>
    <ligand>
        <name>Zn(2+)</name>
        <dbReference type="ChEBI" id="CHEBI:29105"/>
    </ligand>
</feature>
<sequence>MSVLGRRGAGLAARGATLAPLATASYLIRPFSALNRPPPKYPGHVPLTFFERGALAVGSAVGSLMNPRRADLIAALGEATATPYFIYRLRDAMLSDPTGRRILRDRPRITSETLKLPYLRTLPENSVGRTYATWLDREGVSPDTRNSVKYIDDEECAYVMQRYRECHDFYHAVTGLPTFVEGELALKAFEFLNTLIPMTGLSIFAFVRLKPAERERFFSLHLPWAVRSGLASKELINVYWEEILEKDVDELRKELGIERPPDLREIRKLMRQQQKREKERLQGKS</sequence>
<dbReference type="EC" id="4.1.1.130" evidence="1"/>
<dbReference type="EMBL" id="DS499596">
    <property type="protein sequence ID" value="EDP53094.1"/>
    <property type="molecule type" value="Genomic_DNA"/>
</dbReference>
<dbReference type="SMR" id="B0XYZ8"/>
<dbReference type="EnsemblFungi" id="EDP53094">
    <property type="protein sequence ID" value="EDP53094"/>
    <property type="gene ID" value="AFUB_042650"/>
</dbReference>
<dbReference type="VEuPathDB" id="FungiDB:AFUB_042650"/>
<dbReference type="HOGENOM" id="CLU_061241_0_0_1"/>
<dbReference type="OrthoDB" id="93524at5052"/>
<dbReference type="PhylomeDB" id="B0XYZ8"/>
<dbReference type="UniPathway" id="UPA00232"/>
<dbReference type="Proteomes" id="UP000001699">
    <property type="component" value="Unassembled WGS sequence"/>
</dbReference>
<dbReference type="GO" id="GO:0031314">
    <property type="term" value="C:extrinsic component of mitochondrial inner membrane"/>
    <property type="evidence" value="ECO:0007669"/>
    <property type="project" value="UniProtKB-UniRule"/>
</dbReference>
<dbReference type="GO" id="GO:0006744">
    <property type="term" value="P:ubiquinone biosynthetic process"/>
    <property type="evidence" value="ECO:0007669"/>
    <property type="project" value="UniProtKB-UniRule"/>
</dbReference>
<dbReference type="HAMAP" id="MF_03111">
    <property type="entry name" value="Coq4"/>
    <property type="match status" value="1"/>
</dbReference>
<dbReference type="InterPro" id="IPR007715">
    <property type="entry name" value="Coq4"/>
</dbReference>
<dbReference type="InterPro" id="IPR027540">
    <property type="entry name" value="Coq4_euk"/>
</dbReference>
<dbReference type="PANTHER" id="PTHR12922">
    <property type="entry name" value="UBIQUINONE BIOSYNTHESIS PROTEIN"/>
    <property type="match status" value="1"/>
</dbReference>
<dbReference type="PANTHER" id="PTHR12922:SF7">
    <property type="entry name" value="UBIQUINONE BIOSYNTHESIS PROTEIN COQ4 HOMOLOG, MITOCHONDRIAL"/>
    <property type="match status" value="1"/>
</dbReference>
<dbReference type="Pfam" id="PF05019">
    <property type="entry name" value="Coq4"/>
    <property type="match status" value="1"/>
</dbReference>
<gene>
    <name type="primary">coq4</name>
    <name type="ORF">AFUB_042650</name>
</gene>